<dbReference type="EC" id="2.7.7.72" evidence="1"/>
<dbReference type="EC" id="3.1.3.-" evidence="1"/>
<dbReference type="EC" id="3.1.4.-" evidence="1"/>
<dbReference type="EMBL" id="CP000548">
    <property type="protein sequence ID" value="ABO04094.1"/>
    <property type="molecule type" value="Genomic_DNA"/>
</dbReference>
<dbReference type="RefSeq" id="WP_004197240.1">
    <property type="nucleotide sequence ID" value="NZ_CP007802.1"/>
</dbReference>
<dbReference type="SMR" id="A3MRJ1"/>
<dbReference type="KEGG" id="bmaz:BM44_17"/>
<dbReference type="KEGG" id="bmn:BMA10247_3361"/>
<dbReference type="PATRIC" id="fig|320389.8.peg.17"/>
<dbReference type="GO" id="GO:0005524">
    <property type="term" value="F:ATP binding"/>
    <property type="evidence" value="ECO:0007669"/>
    <property type="project" value="UniProtKB-UniRule"/>
</dbReference>
<dbReference type="GO" id="GO:0004810">
    <property type="term" value="F:CCA tRNA nucleotidyltransferase activity"/>
    <property type="evidence" value="ECO:0007669"/>
    <property type="project" value="UniProtKB-UniRule"/>
</dbReference>
<dbReference type="GO" id="GO:0004112">
    <property type="term" value="F:cyclic-nucleotide phosphodiesterase activity"/>
    <property type="evidence" value="ECO:0007669"/>
    <property type="project" value="UniProtKB-UniRule"/>
</dbReference>
<dbReference type="GO" id="GO:0000287">
    <property type="term" value="F:magnesium ion binding"/>
    <property type="evidence" value="ECO:0007669"/>
    <property type="project" value="UniProtKB-UniRule"/>
</dbReference>
<dbReference type="GO" id="GO:0016791">
    <property type="term" value="F:phosphatase activity"/>
    <property type="evidence" value="ECO:0007669"/>
    <property type="project" value="UniProtKB-UniRule"/>
</dbReference>
<dbReference type="GO" id="GO:0000049">
    <property type="term" value="F:tRNA binding"/>
    <property type="evidence" value="ECO:0007669"/>
    <property type="project" value="UniProtKB-UniRule"/>
</dbReference>
<dbReference type="GO" id="GO:0042245">
    <property type="term" value="P:RNA repair"/>
    <property type="evidence" value="ECO:0007669"/>
    <property type="project" value="UniProtKB-KW"/>
</dbReference>
<dbReference type="GO" id="GO:0001680">
    <property type="term" value="P:tRNA 3'-terminal CCA addition"/>
    <property type="evidence" value="ECO:0007669"/>
    <property type="project" value="UniProtKB-UniRule"/>
</dbReference>
<dbReference type="CDD" id="cd05398">
    <property type="entry name" value="NT_ClassII-CCAase"/>
    <property type="match status" value="1"/>
</dbReference>
<dbReference type="Gene3D" id="3.30.460.10">
    <property type="entry name" value="Beta Polymerase, domain 2"/>
    <property type="match status" value="1"/>
</dbReference>
<dbReference type="Gene3D" id="1.10.3090.10">
    <property type="entry name" value="cca-adding enzyme, domain 2"/>
    <property type="match status" value="1"/>
</dbReference>
<dbReference type="HAMAP" id="MF_01261">
    <property type="entry name" value="CCA_bact_type1"/>
    <property type="match status" value="1"/>
</dbReference>
<dbReference type="HAMAP" id="MF_01262">
    <property type="entry name" value="CCA_bact_type2"/>
    <property type="match status" value="1"/>
</dbReference>
<dbReference type="InterPro" id="IPR012006">
    <property type="entry name" value="CCA_bact"/>
</dbReference>
<dbReference type="InterPro" id="IPR006674">
    <property type="entry name" value="HD_domain"/>
</dbReference>
<dbReference type="InterPro" id="IPR043519">
    <property type="entry name" value="NT_sf"/>
</dbReference>
<dbReference type="InterPro" id="IPR002646">
    <property type="entry name" value="PolA_pol_head_dom"/>
</dbReference>
<dbReference type="InterPro" id="IPR032828">
    <property type="entry name" value="PolyA_RNA-bd"/>
</dbReference>
<dbReference type="InterPro" id="IPR050124">
    <property type="entry name" value="tRNA_CCA-adding_enzyme"/>
</dbReference>
<dbReference type="NCBIfam" id="NF008137">
    <property type="entry name" value="PRK10885.1"/>
    <property type="match status" value="1"/>
</dbReference>
<dbReference type="PANTHER" id="PTHR47545">
    <property type="entry name" value="MULTIFUNCTIONAL CCA PROTEIN"/>
    <property type="match status" value="1"/>
</dbReference>
<dbReference type="PANTHER" id="PTHR47545:SF1">
    <property type="entry name" value="MULTIFUNCTIONAL CCA PROTEIN"/>
    <property type="match status" value="1"/>
</dbReference>
<dbReference type="Pfam" id="PF01966">
    <property type="entry name" value="HD"/>
    <property type="match status" value="1"/>
</dbReference>
<dbReference type="Pfam" id="PF01743">
    <property type="entry name" value="PolyA_pol"/>
    <property type="match status" value="1"/>
</dbReference>
<dbReference type="Pfam" id="PF12627">
    <property type="entry name" value="PolyA_pol_RNAbd"/>
    <property type="match status" value="1"/>
</dbReference>
<dbReference type="PIRSF" id="PIRSF000813">
    <property type="entry name" value="CCA_bact"/>
    <property type="match status" value="1"/>
</dbReference>
<dbReference type="SUPFAM" id="SSF81301">
    <property type="entry name" value="Nucleotidyltransferase"/>
    <property type="match status" value="1"/>
</dbReference>
<dbReference type="SUPFAM" id="SSF81891">
    <property type="entry name" value="Poly A polymerase C-terminal region-like"/>
    <property type="match status" value="1"/>
</dbReference>
<dbReference type="PROSITE" id="PS51831">
    <property type="entry name" value="HD"/>
    <property type="match status" value="1"/>
</dbReference>
<name>CCA_BURM7</name>
<proteinExistence type="inferred from homology"/>
<reference key="1">
    <citation type="journal article" date="2010" name="Genome Biol. Evol.">
        <title>Continuing evolution of Burkholderia mallei through genome reduction and large-scale rearrangements.</title>
        <authorList>
            <person name="Losada L."/>
            <person name="Ronning C.M."/>
            <person name="DeShazer D."/>
            <person name="Woods D."/>
            <person name="Fedorova N."/>
            <person name="Kim H.S."/>
            <person name="Shabalina S.A."/>
            <person name="Pearson T.R."/>
            <person name="Brinkac L."/>
            <person name="Tan P."/>
            <person name="Nandi T."/>
            <person name="Crabtree J."/>
            <person name="Badger J."/>
            <person name="Beckstrom-Sternberg S."/>
            <person name="Saqib M."/>
            <person name="Schutzer S.E."/>
            <person name="Keim P."/>
            <person name="Nierman W.C."/>
        </authorList>
    </citation>
    <scope>NUCLEOTIDE SEQUENCE [LARGE SCALE GENOMIC DNA]</scope>
    <source>
        <strain>NCTC 10247</strain>
    </source>
</reference>
<comment type="function">
    <text evidence="1">Catalyzes the addition and repair of the essential 3'-terminal CCA sequence in tRNAs without using a nucleic acid template. Adds these three nucleotides in the order of C, C, and A to the tRNA nucleotide-73, using CTP and ATP as substrates and producing inorganic pyrophosphate. tRNA 3'-terminal CCA addition is required both for tRNA processing and repair. Also involved in tRNA surveillance by mediating tandem CCA addition to generate a CCACCA at the 3' terminus of unstable tRNAs. While stable tRNAs receive only 3'-terminal CCA, unstable tRNAs are marked with CCACCA and rapidly degraded.</text>
</comment>
<comment type="catalytic activity">
    <reaction evidence="1">
        <text>a tRNA precursor + 2 CTP + ATP = a tRNA with a 3' CCA end + 3 diphosphate</text>
        <dbReference type="Rhea" id="RHEA:14433"/>
        <dbReference type="Rhea" id="RHEA-COMP:10465"/>
        <dbReference type="Rhea" id="RHEA-COMP:10468"/>
        <dbReference type="ChEBI" id="CHEBI:30616"/>
        <dbReference type="ChEBI" id="CHEBI:33019"/>
        <dbReference type="ChEBI" id="CHEBI:37563"/>
        <dbReference type="ChEBI" id="CHEBI:74896"/>
        <dbReference type="ChEBI" id="CHEBI:83071"/>
        <dbReference type="EC" id="2.7.7.72"/>
    </reaction>
</comment>
<comment type="catalytic activity">
    <reaction evidence="1">
        <text>a tRNA with a 3' CCA end + 2 CTP + ATP = a tRNA with a 3' CCACCA end + 3 diphosphate</text>
        <dbReference type="Rhea" id="RHEA:76235"/>
        <dbReference type="Rhea" id="RHEA-COMP:10468"/>
        <dbReference type="Rhea" id="RHEA-COMP:18655"/>
        <dbReference type="ChEBI" id="CHEBI:30616"/>
        <dbReference type="ChEBI" id="CHEBI:33019"/>
        <dbReference type="ChEBI" id="CHEBI:37563"/>
        <dbReference type="ChEBI" id="CHEBI:83071"/>
        <dbReference type="ChEBI" id="CHEBI:195187"/>
    </reaction>
    <physiologicalReaction direction="left-to-right" evidence="1">
        <dbReference type="Rhea" id="RHEA:76236"/>
    </physiologicalReaction>
</comment>
<comment type="cofactor">
    <cofactor evidence="1">
        <name>Mg(2+)</name>
        <dbReference type="ChEBI" id="CHEBI:18420"/>
    </cofactor>
    <text evidence="1">Magnesium is required for nucleotidyltransferase activity.</text>
</comment>
<comment type="cofactor">
    <cofactor evidence="1">
        <name>Ni(2+)</name>
        <dbReference type="ChEBI" id="CHEBI:49786"/>
    </cofactor>
    <text evidence="1">Nickel for phosphatase activity.</text>
</comment>
<comment type="subunit">
    <text evidence="1">Monomer. Can also form homodimers and oligomers.</text>
</comment>
<comment type="domain">
    <text evidence="1">Comprises two domains: an N-terminal domain containing the nucleotidyltransferase activity and a C-terminal HD domain associated with both phosphodiesterase and phosphatase activities.</text>
</comment>
<comment type="miscellaneous">
    <text evidence="1">A single active site specifically recognizes both ATP and CTP and is responsible for their addition.</text>
</comment>
<comment type="similarity">
    <text evidence="1">Belongs to the tRNA nucleotidyltransferase/poly(A) polymerase family. Bacterial CCA-adding enzyme type 1 subfamily.</text>
</comment>
<protein>
    <recommendedName>
        <fullName evidence="1">Multifunctional CCA protein</fullName>
    </recommendedName>
    <domain>
        <recommendedName>
            <fullName evidence="1">CCA-adding enzyme</fullName>
            <ecNumber evidence="1">2.7.7.72</ecNumber>
        </recommendedName>
        <alternativeName>
            <fullName evidence="1">CCA tRNA nucleotidyltransferase</fullName>
        </alternativeName>
        <alternativeName>
            <fullName evidence="1">tRNA CCA-pyrophosphorylase</fullName>
        </alternativeName>
        <alternativeName>
            <fullName evidence="1">tRNA adenylyl-/cytidylyl-transferase</fullName>
        </alternativeName>
        <alternativeName>
            <fullName evidence="1">tRNA nucleotidyltransferase</fullName>
        </alternativeName>
        <alternativeName>
            <fullName evidence="1">tRNA-NT</fullName>
        </alternativeName>
    </domain>
    <domain>
        <recommendedName>
            <fullName evidence="1">2'-nucleotidase</fullName>
            <ecNumber evidence="1">3.1.3.-</ecNumber>
        </recommendedName>
    </domain>
    <domain>
        <recommendedName>
            <fullName evidence="1">2',3'-cyclic phosphodiesterase</fullName>
            <ecNumber evidence="1">3.1.4.-</ecNumber>
        </recommendedName>
    </domain>
    <domain>
        <recommendedName>
            <fullName evidence="1">Phosphatase</fullName>
            <ecNumber evidence="1">3.1.3.-</ecNumber>
        </recommendedName>
    </domain>
</protein>
<evidence type="ECO:0000255" key="1">
    <source>
        <dbReference type="HAMAP-Rule" id="MF_01261"/>
    </source>
</evidence>
<feature type="chain" id="PRO_1000054253" description="Multifunctional CCA protein">
    <location>
        <begin position="1"/>
        <end position="413"/>
    </location>
</feature>
<feature type="domain" description="HD" evidence="1">
    <location>
        <begin position="232"/>
        <end position="333"/>
    </location>
</feature>
<feature type="binding site" evidence="1">
    <location>
        <position position="8"/>
    </location>
    <ligand>
        <name>ATP</name>
        <dbReference type="ChEBI" id="CHEBI:30616"/>
    </ligand>
</feature>
<feature type="binding site" evidence="1">
    <location>
        <position position="8"/>
    </location>
    <ligand>
        <name>CTP</name>
        <dbReference type="ChEBI" id="CHEBI:37563"/>
    </ligand>
</feature>
<feature type="binding site" evidence="1">
    <location>
        <position position="11"/>
    </location>
    <ligand>
        <name>ATP</name>
        <dbReference type="ChEBI" id="CHEBI:30616"/>
    </ligand>
</feature>
<feature type="binding site" evidence="1">
    <location>
        <position position="11"/>
    </location>
    <ligand>
        <name>CTP</name>
        <dbReference type="ChEBI" id="CHEBI:37563"/>
    </ligand>
</feature>
<feature type="binding site" evidence="1">
    <location>
        <position position="21"/>
    </location>
    <ligand>
        <name>Mg(2+)</name>
        <dbReference type="ChEBI" id="CHEBI:18420"/>
    </ligand>
</feature>
<feature type="binding site" evidence="1">
    <location>
        <position position="23"/>
    </location>
    <ligand>
        <name>Mg(2+)</name>
        <dbReference type="ChEBI" id="CHEBI:18420"/>
    </ligand>
</feature>
<feature type="binding site" evidence="1">
    <location>
        <position position="91"/>
    </location>
    <ligand>
        <name>ATP</name>
        <dbReference type="ChEBI" id="CHEBI:30616"/>
    </ligand>
</feature>
<feature type="binding site" evidence="1">
    <location>
        <position position="91"/>
    </location>
    <ligand>
        <name>CTP</name>
        <dbReference type="ChEBI" id="CHEBI:37563"/>
    </ligand>
</feature>
<feature type="binding site" evidence="1">
    <location>
        <position position="143"/>
    </location>
    <ligand>
        <name>ATP</name>
        <dbReference type="ChEBI" id="CHEBI:30616"/>
    </ligand>
</feature>
<feature type="binding site" evidence="1">
    <location>
        <position position="143"/>
    </location>
    <ligand>
        <name>CTP</name>
        <dbReference type="ChEBI" id="CHEBI:37563"/>
    </ligand>
</feature>
<feature type="binding site" evidence="1">
    <location>
        <position position="146"/>
    </location>
    <ligand>
        <name>ATP</name>
        <dbReference type="ChEBI" id="CHEBI:30616"/>
    </ligand>
</feature>
<feature type="binding site" evidence="1">
    <location>
        <position position="146"/>
    </location>
    <ligand>
        <name>CTP</name>
        <dbReference type="ChEBI" id="CHEBI:37563"/>
    </ligand>
</feature>
<accession>A3MRJ1</accession>
<keyword id="KW-0067">ATP-binding</keyword>
<keyword id="KW-0378">Hydrolase</keyword>
<keyword id="KW-0460">Magnesium</keyword>
<keyword id="KW-0479">Metal-binding</keyword>
<keyword id="KW-0511">Multifunctional enzyme</keyword>
<keyword id="KW-0533">Nickel</keyword>
<keyword id="KW-0547">Nucleotide-binding</keyword>
<keyword id="KW-0548">Nucleotidyltransferase</keyword>
<keyword id="KW-0692">RNA repair</keyword>
<keyword id="KW-0694">RNA-binding</keyword>
<keyword id="KW-0808">Transferase</keyword>
<keyword id="KW-0819">tRNA processing</keyword>
<organism>
    <name type="scientific">Burkholderia mallei (strain NCTC 10247)</name>
    <dbReference type="NCBI Taxonomy" id="320389"/>
    <lineage>
        <taxon>Bacteria</taxon>
        <taxon>Pseudomonadati</taxon>
        <taxon>Pseudomonadota</taxon>
        <taxon>Betaproteobacteria</taxon>
        <taxon>Burkholderiales</taxon>
        <taxon>Burkholderiaceae</taxon>
        <taxon>Burkholderia</taxon>
        <taxon>pseudomallei group</taxon>
    </lineage>
</organism>
<gene>
    <name evidence="1" type="primary">cca</name>
    <name type="ordered locus">BMA10247_3361</name>
</gene>
<sequence length="413" mass="45113">MKIYAVGGAIRDALLGLPVRDRDYVVVGATPEQMAAQRFRPVGKDFPVFLHPDTHEEYALARTERKTAAGYHGFQFYYAPDVTLEQDLVRRDLTINAMAREVSPDGALVGPVVDPFGGQADLRAKLFRHVGDAFVEDPVRILRVARFAARFAEFAVAPDTAALMRAMVDAGEVDALVPERVWQELARGLMEAKPSRMFAVLRECGALARILPEIDALFGVPQRADYHPEVDTGVHVMMVIDHAAKQGYSLPVRFAALTHDLGKATTPADVLPRHIGHEGRSVDLLKPLCERLRVPNECRDLALVVAREHGNLHRVMEMGAAALVRLLERADALRKPARFAEALQASEADARGRLGLETKPYPQAERLRQALVAARAVDAGAIAQGLAGEPAKIKDAVHRARVRAVAQAVGVAD</sequence>